<feature type="chain" id="PRO_0000097241" description="Rhythmically expressed gene 5 protein">
    <location>
        <begin position="1"/>
        <end position="288"/>
    </location>
</feature>
<feature type="sequence conflict" description="In Ref. 1; AAC47267." evidence="2" ref="1">
    <original>M</original>
    <variation>V</variation>
    <location>
        <position position="193"/>
    </location>
</feature>
<protein>
    <recommendedName>
        <fullName>Rhythmically expressed gene 5 protein</fullName>
    </recommendedName>
    <alternativeName>
        <fullName>dReg-5</fullName>
    </alternativeName>
</protein>
<reference key="1">
    <citation type="journal article" date="1996" name="EMBO J.">
        <title>A novel circadianly expressed Drosophila melanogaster gene dependent on the period gene for its rhythmic expression.</title>
        <authorList>
            <person name="van Gelder R.N."/>
            <person name="Krasnow M.A."/>
        </authorList>
    </citation>
    <scope>NUCLEOTIDE SEQUENCE [MRNA]</scope>
    <scope>FUNCTION</scope>
    <scope>TISSUE SPECIFICITY</scope>
    <scope>DEVELOPMENTAL STAGE</scope>
    <source>
        <strain>Canton-S</strain>
        <tissue>Head</tissue>
    </source>
</reference>
<reference key="2">
    <citation type="journal article" date="2000" name="Science">
        <title>The genome sequence of Drosophila melanogaster.</title>
        <authorList>
            <person name="Adams M.D."/>
            <person name="Celniker S.E."/>
            <person name="Holt R.A."/>
            <person name="Evans C.A."/>
            <person name="Gocayne J.D."/>
            <person name="Amanatides P.G."/>
            <person name="Scherer S.E."/>
            <person name="Li P.W."/>
            <person name="Hoskins R.A."/>
            <person name="Galle R.F."/>
            <person name="George R.A."/>
            <person name="Lewis S.E."/>
            <person name="Richards S."/>
            <person name="Ashburner M."/>
            <person name="Henderson S.N."/>
            <person name="Sutton G.G."/>
            <person name="Wortman J.R."/>
            <person name="Yandell M.D."/>
            <person name="Zhang Q."/>
            <person name="Chen L.X."/>
            <person name="Brandon R.C."/>
            <person name="Rogers Y.-H.C."/>
            <person name="Blazej R.G."/>
            <person name="Champe M."/>
            <person name="Pfeiffer B.D."/>
            <person name="Wan K.H."/>
            <person name="Doyle C."/>
            <person name="Baxter E.G."/>
            <person name="Helt G."/>
            <person name="Nelson C.R."/>
            <person name="Miklos G.L.G."/>
            <person name="Abril J.F."/>
            <person name="Agbayani A."/>
            <person name="An H.-J."/>
            <person name="Andrews-Pfannkoch C."/>
            <person name="Baldwin D."/>
            <person name="Ballew R.M."/>
            <person name="Basu A."/>
            <person name="Baxendale J."/>
            <person name="Bayraktaroglu L."/>
            <person name="Beasley E.M."/>
            <person name="Beeson K.Y."/>
            <person name="Benos P.V."/>
            <person name="Berman B.P."/>
            <person name="Bhandari D."/>
            <person name="Bolshakov S."/>
            <person name="Borkova D."/>
            <person name="Botchan M.R."/>
            <person name="Bouck J."/>
            <person name="Brokstein P."/>
            <person name="Brottier P."/>
            <person name="Burtis K.C."/>
            <person name="Busam D.A."/>
            <person name="Butler H."/>
            <person name="Cadieu E."/>
            <person name="Center A."/>
            <person name="Chandra I."/>
            <person name="Cherry J.M."/>
            <person name="Cawley S."/>
            <person name="Dahlke C."/>
            <person name="Davenport L.B."/>
            <person name="Davies P."/>
            <person name="de Pablos B."/>
            <person name="Delcher A."/>
            <person name="Deng Z."/>
            <person name="Mays A.D."/>
            <person name="Dew I."/>
            <person name="Dietz S.M."/>
            <person name="Dodson K."/>
            <person name="Doup L.E."/>
            <person name="Downes M."/>
            <person name="Dugan-Rocha S."/>
            <person name="Dunkov B.C."/>
            <person name="Dunn P."/>
            <person name="Durbin K.J."/>
            <person name="Evangelista C.C."/>
            <person name="Ferraz C."/>
            <person name="Ferriera S."/>
            <person name="Fleischmann W."/>
            <person name="Fosler C."/>
            <person name="Gabrielian A.E."/>
            <person name="Garg N.S."/>
            <person name="Gelbart W.M."/>
            <person name="Glasser K."/>
            <person name="Glodek A."/>
            <person name="Gong F."/>
            <person name="Gorrell J.H."/>
            <person name="Gu Z."/>
            <person name="Guan P."/>
            <person name="Harris M."/>
            <person name="Harris N.L."/>
            <person name="Harvey D.A."/>
            <person name="Heiman T.J."/>
            <person name="Hernandez J.R."/>
            <person name="Houck J."/>
            <person name="Hostin D."/>
            <person name="Houston K.A."/>
            <person name="Howland T.J."/>
            <person name="Wei M.-H."/>
            <person name="Ibegwam C."/>
            <person name="Jalali M."/>
            <person name="Kalush F."/>
            <person name="Karpen G.H."/>
            <person name="Ke Z."/>
            <person name="Kennison J.A."/>
            <person name="Ketchum K.A."/>
            <person name="Kimmel B.E."/>
            <person name="Kodira C.D."/>
            <person name="Kraft C.L."/>
            <person name="Kravitz S."/>
            <person name="Kulp D."/>
            <person name="Lai Z."/>
            <person name="Lasko P."/>
            <person name="Lei Y."/>
            <person name="Levitsky A.A."/>
            <person name="Li J.H."/>
            <person name="Li Z."/>
            <person name="Liang Y."/>
            <person name="Lin X."/>
            <person name="Liu X."/>
            <person name="Mattei B."/>
            <person name="McIntosh T.C."/>
            <person name="McLeod M.P."/>
            <person name="McPherson D."/>
            <person name="Merkulov G."/>
            <person name="Milshina N.V."/>
            <person name="Mobarry C."/>
            <person name="Morris J."/>
            <person name="Moshrefi A."/>
            <person name="Mount S.M."/>
            <person name="Moy M."/>
            <person name="Murphy B."/>
            <person name="Murphy L."/>
            <person name="Muzny D.M."/>
            <person name="Nelson D.L."/>
            <person name="Nelson D.R."/>
            <person name="Nelson K.A."/>
            <person name="Nixon K."/>
            <person name="Nusskern D.R."/>
            <person name="Pacleb J.M."/>
            <person name="Palazzolo M."/>
            <person name="Pittman G.S."/>
            <person name="Pan S."/>
            <person name="Pollard J."/>
            <person name="Puri V."/>
            <person name="Reese M.G."/>
            <person name="Reinert K."/>
            <person name="Remington K."/>
            <person name="Saunders R.D.C."/>
            <person name="Scheeler F."/>
            <person name="Shen H."/>
            <person name="Shue B.C."/>
            <person name="Siden-Kiamos I."/>
            <person name="Simpson M."/>
            <person name="Skupski M.P."/>
            <person name="Smith T.J."/>
            <person name="Spier E."/>
            <person name="Spradling A.C."/>
            <person name="Stapleton M."/>
            <person name="Strong R."/>
            <person name="Sun E."/>
            <person name="Svirskas R."/>
            <person name="Tector C."/>
            <person name="Turner R."/>
            <person name="Venter E."/>
            <person name="Wang A.H."/>
            <person name="Wang X."/>
            <person name="Wang Z.-Y."/>
            <person name="Wassarman D.A."/>
            <person name="Weinstock G.M."/>
            <person name="Weissenbach J."/>
            <person name="Williams S.M."/>
            <person name="Woodage T."/>
            <person name="Worley K.C."/>
            <person name="Wu D."/>
            <person name="Yang S."/>
            <person name="Yao Q.A."/>
            <person name="Ye J."/>
            <person name="Yeh R.-F."/>
            <person name="Zaveri J.S."/>
            <person name="Zhan M."/>
            <person name="Zhang G."/>
            <person name="Zhao Q."/>
            <person name="Zheng L."/>
            <person name="Zheng X.H."/>
            <person name="Zhong F.N."/>
            <person name="Zhong W."/>
            <person name="Zhou X."/>
            <person name="Zhu S.C."/>
            <person name="Zhu X."/>
            <person name="Smith H.O."/>
            <person name="Gibbs R.A."/>
            <person name="Myers E.W."/>
            <person name="Rubin G.M."/>
            <person name="Venter J.C."/>
        </authorList>
    </citation>
    <scope>NUCLEOTIDE SEQUENCE [LARGE SCALE GENOMIC DNA]</scope>
    <source>
        <strain>Berkeley</strain>
    </source>
</reference>
<reference key="3">
    <citation type="journal article" date="2002" name="Genome Biol.">
        <title>Annotation of the Drosophila melanogaster euchromatic genome: a systematic review.</title>
        <authorList>
            <person name="Misra S."/>
            <person name="Crosby M.A."/>
            <person name="Mungall C.J."/>
            <person name="Matthews B.B."/>
            <person name="Campbell K.S."/>
            <person name="Hradecky P."/>
            <person name="Huang Y."/>
            <person name="Kaminker J.S."/>
            <person name="Millburn G.H."/>
            <person name="Prochnik S.E."/>
            <person name="Smith C.D."/>
            <person name="Tupy J.L."/>
            <person name="Whitfield E.J."/>
            <person name="Bayraktaroglu L."/>
            <person name="Berman B.P."/>
            <person name="Bettencourt B.R."/>
            <person name="Celniker S.E."/>
            <person name="de Grey A.D.N.J."/>
            <person name="Drysdale R.A."/>
            <person name="Harris N.L."/>
            <person name="Richter J."/>
            <person name="Russo S."/>
            <person name="Schroeder A.J."/>
            <person name="Shu S.Q."/>
            <person name="Stapleton M."/>
            <person name="Yamada C."/>
            <person name="Ashburner M."/>
            <person name="Gelbart W.M."/>
            <person name="Rubin G.M."/>
            <person name="Lewis S.E."/>
        </authorList>
    </citation>
    <scope>GENOME REANNOTATION</scope>
    <source>
        <strain>Berkeley</strain>
    </source>
</reference>
<reference key="4">
    <citation type="journal article" date="2002" name="Genome Biol.">
        <title>A Drosophila full-length cDNA resource.</title>
        <authorList>
            <person name="Stapleton M."/>
            <person name="Carlson J.W."/>
            <person name="Brokstein P."/>
            <person name="Yu C."/>
            <person name="Champe M."/>
            <person name="George R.A."/>
            <person name="Guarin H."/>
            <person name="Kronmiller B."/>
            <person name="Pacleb J.M."/>
            <person name="Park S."/>
            <person name="Wan K.H."/>
            <person name="Rubin G.M."/>
            <person name="Celniker S.E."/>
        </authorList>
    </citation>
    <scope>NUCLEOTIDE SEQUENCE [LARGE SCALE MRNA]</scope>
    <source>
        <strain>Berkeley</strain>
        <tissue>Embryo</tissue>
        <tissue>Head</tissue>
    </source>
</reference>
<organism>
    <name type="scientific">Drosophila melanogaster</name>
    <name type="common">Fruit fly</name>
    <dbReference type="NCBI Taxonomy" id="7227"/>
    <lineage>
        <taxon>Eukaryota</taxon>
        <taxon>Metazoa</taxon>
        <taxon>Ecdysozoa</taxon>
        <taxon>Arthropoda</taxon>
        <taxon>Hexapoda</taxon>
        <taxon>Insecta</taxon>
        <taxon>Pterygota</taxon>
        <taxon>Neoptera</taxon>
        <taxon>Endopterygota</taxon>
        <taxon>Diptera</taxon>
        <taxon>Brachycera</taxon>
        <taxon>Muscomorpha</taxon>
        <taxon>Ephydroidea</taxon>
        <taxon>Drosophilidae</taxon>
        <taxon>Drosophila</taxon>
        <taxon>Sophophora</taxon>
    </lineage>
</organism>
<accession>Q94913</accession>
<accession>Q95RZ9</accession>
<accession>Q9W104</accession>
<keyword id="KW-0090">Biological rhythms</keyword>
<keyword id="KW-1185">Reference proteome</keyword>
<gene>
    <name type="primary">Reg-5</name>
    <name type="ORF">CG2928</name>
</gene>
<evidence type="ECO:0000269" key="1">
    <source>
    </source>
</evidence>
<evidence type="ECO:0000305" key="2"/>
<name>REG5_DROME</name>
<comment type="function">
    <text evidence="1 2">Involved in the generation of biological rhythms (Potential). In the head, oscillates in abundance with a daily peak during early night, even under constant darkness. Oscillation is dependent on period (per) function.</text>
</comment>
<comment type="tissue specificity">
    <text evidence="1">Expressed in head, but not in the body. Expression levels oscillate with the circadian rhythm.</text>
</comment>
<comment type="developmental stage">
    <text evidence="1">Expressed in 24 hours embryo.</text>
</comment>
<comment type="sequence caution" evidence="2">
    <conflict type="frameshift">
        <sequence resource="EMBL-CDS" id="AAC47267"/>
    </conflict>
</comment>
<comment type="sequence caution" evidence="2">
    <conflict type="miscellaneous discrepancy">
        <sequence resource="EMBL-CDS" id="AAL28570"/>
    </conflict>
    <text>Intron retention.</text>
</comment>
<sequence length="288" mass="31601">MTTAAKVILACCLLGAFHIQISSSSAIPIWEFLTRNEKMSHLYSTFAQLVSVHCKSTAAVGGLPVNQCKHNLLGYGSAKLQTLSDVQLEALDPYQRDANELIWSSIMGDHPSGASLVTTRQPLQQPLPTPPASSLIILTRQQLPHGASHAHPIQSSGSATNPIFESGEQKHKYAMDMDKAYGYGPQSSSELPMAAALTSEPSKRFLTGPLVIRVRPDGSPVEEDKMMPLPRDEDLPYFHLGLAAAQPNRHRKIATISSLKQQHFASILQSDLQPPHQTQRRLFRQQQA</sequence>
<dbReference type="EMBL" id="U65105">
    <property type="protein sequence ID" value="AAC47267.1"/>
    <property type="status" value="ALT_FRAME"/>
    <property type="molecule type" value="mRNA"/>
</dbReference>
<dbReference type="EMBL" id="AE013599">
    <property type="protein sequence ID" value="AAF47274.1"/>
    <property type="molecule type" value="Genomic_DNA"/>
</dbReference>
<dbReference type="EMBL" id="AY061022">
    <property type="protein sequence ID" value="AAL28570.1"/>
    <property type="status" value="ALT_SEQ"/>
    <property type="molecule type" value="mRNA"/>
</dbReference>
<dbReference type="EMBL" id="AY071459">
    <property type="protein sequence ID" value="AAL49081.1"/>
    <property type="molecule type" value="mRNA"/>
</dbReference>
<dbReference type="PIR" id="S69241">
    <property type="entry name" value="S69241"/>
</dbReference>
<dbReference type="RefSeq" id="NP_001246504.1">
    <property type="nucleotide sequence ID" value="NM_001259575.2"/>
</dbReference>
<dbReference type="RefSeq" id="NP_477173.1">
    <property type="nucleotide sequence ID" value="NM_057825.5"/>
</dbReference>
<dbReference type="FunCoup" id="Q94913">
    <property type="interactions" value="11"/>
</dbReference>
<dbReference type="STRING" id="7227.FBpp0072332"/>
<dbReference type="GlyGen" id="Q94913">
    <property type="glycosylation" value="1 site"/>
</dbReference>
<dbReference type="PaxDb" id="7227-FBpp0072332"/>
<dbReference type="DNASU" id="37968"/>
<dbReference type="EnsemblMetazoa" id="FBtr0072427">
    <property type="protein sequence ID" value="FBpp0072332"/>
    <property type="gene ID" value="FBgn0015801"/>
</dbReference>
<dbReference type="GeneID" id="37968"/>
<dbReference type="KEGG" id="dme:Dmel_CG2928"/>
<dbReference type="AGR" id="FB:FBgn0015801"/>
<dbReference type="CTD" id="37968"/>
<dbReference type="FlyBase" id="FBgn0015801">
    <property type="gene designation" value="Reg-5"/>
</dbReference>
<dbReference type="VEuPathDB" id="VectorBase:FBgn0015801"/>
<dbReference type="eggNOG" id="ENOG502S4SS">
    <property type="taxonomic scope" value="Eukaryota"/>
</dbReference>
<dbReference type="HOGENOM" id="CLU_1027682_0_0_1"/>
<dbReference type="InParanoid" id="Q94913"/>
<dbReference type="OMA" id="RNEKMSY"/>
<dbReference type="OrthoDB" id="6359856at2759"/>
<dbReference type="PhylomeDB" id="Q94913"/>
<dbReference type="BioGRID-ORCS" id="37968">
    <property type="hits" value="0 hits in 1 CRISPR screen"/>
</dbReference>
<dbReference type="ChiTaRS" id="Reg-5">
    <property type="organism name" value="fly"/>
</dbReference>
<dbReference type="GenomeRNAi" id="37968"/>
<dbReference type="PRO" id="PR:Q94913"/>
<dbReference type="Proteomes" id="UP000000803">
    <property type="component" value="Chromosome 2R"/>
</dbReference>
<dbReference type="Bgee" id="FBgn0015801">
    <property type="expression patterns" value="Expressed in tormogen cell in proboscis and 174 other cell types or tissues"/>
</dbReference>
<dbReference type="ExpressionAtlas" id="Q94913">
    <property type="expression patterns" value="baseline and differential"/>
</dbReference>
<dbReference type="GO" id="GO:0048511">
    <property type="term" value="P:rhythmic process"/>
    <property type="evidence" value="ECO:0007669"/>
    <property type="project" value="UniProtKB-KW"/>
</dbReference>
<proteinExistence type="evidence at transcript level"/>